<feature type="chain" id="PRO_0000073328" description="ATP synthase gamma chain">
    <location>
        <begin position="1"/>
        <end position="291"/>
    </location>
</feature>
<proteinExistence type="inferred from homology"/>
<accession>Q9JW71</accession>
<accession>A1IPX4</accession>
<organism>
    <name type="scientific">Neisseria meningitidis serogroup A / serotype 4A (strain DSM 15465 / Z2491)</name>
    <dbReference type="NCBI Taxonomy" id="122587"/>
    <lineage>
        <taxon>Bacteria</taxon>
        <taxon>Pseudomonadati</taxon>
        <taxon>Pseudomonadota</taxon>
        <taxon>Betaproteobacteria</taxon>
        <taxon>Neisseriales</taxon>
        <taxon>Neisseriaceae</taxon>
        <taxon>Neisseria</taxon>
    </lineage>
</organism>
<protein>
    <recommendedName>
        <fullName evidence="1">ATP synthase gamma chain</fullName>
    </recommendedName>
    <alternativeName>
        <fullName evidence="1">ATP synthase F1 sector gamma subunit</fullName>
    </alternativeName>
    <alternativeName>
        <fullName evidence="1">F-ATPase gamma subunit</fullName>
    </alternativeName>
</protein>
<evidence type="ECO:0000255" key="1">
    <source>
        <dbReference type="HAMAP-Rule" id="MF_00815"/>
    </source>
</evidence>
<reference key="1">
    <citation type="journal article" date="2000" name="Nature">
        <title>Complete DNA sequence of a serogroup A strain of Neisseria meningitidis Z2491.</title>
        <authorList>
            <person name="Parkhill J."/>
            <person name="Achtman M."/>
            <person name="James K.D."/>
            <person name="Bentley S.D."/>
            <person name="Churcher C.M."/>
            <person name="Klee S.R."/>
            <person name="Morelli G."/>
            <person name="Basham D."/>
            <person name="Brown D."/>
            <person name="Chillingworth T."/>
            <person name="Davies R.M."/>
            <person name="Davis P."/>
            <person name="Devlin K."/>
            <person name="Feltwell T."/>
            <person name="Hamlin N."/>
            <person name="Holroyd S."/>
            <person name="Jagels K."/>
            <person name="Leather S."/>
            <person name="Moule S."/>
            <person name="Mungall K.L."/>
            <person name="Quail M.A."/>
            <person name="Rajandream M.A."/>
            <person name="Rutherford K.M."/>
            <person name="Simmonds M."/>
            <person name="Skelton J."/>
            <person name="Whitehead S."/>
            <person name="Spratt B.G."/>
            <person name="Barrell B.G."/>
        </authorList>
    </citation>
    <scope>NUCLEOTIDE SEQUENCE [LARGE SCALE GENOMIC DNA]</scope>
    <source>
        <strain>DSM 15465 / Z2491</strain>
    </source>
</reference>
<keyword id="KW-0066">ATP synthesis</keyword>
<keyword id="KW-0997">Cell inner membrane</keyword>
<keyword id="KW-1003">Cell membrane</keyword>
<keyword id="KW-0139">CF(1)</keyword>
<keyword id="KW-0375">Hydrogen ion transport</keyword>
<keyword id="KW-0406">Ion transport</keyword>
<keyword id="KW-0472">Membrane</keyword>
<keyword id="KW-0813">Transport</keyword>
<dbReference type="EMBL" id="AL157959">
    <property type="protein sequence ID" value="CAM07795.1"/>
    <property type="molecule type" value="Genomic_DNA"/>
</dbReference>
<dbReference type="PIR" id="B81970">
    <property type="entry name" value="B81970"/>
</dbReference>
<dbReference type="RefSeq" id="WP_002214786.1">
    <property type="nucleotide sequence ID" value="NC_003116.1"/>
</dbReference>
<dbReference type="SMR" id="Q9JW71"/>
<dbReference type="EnsemblBacteria" id="CAM07795">
    <property type="protein sequence ID" value="CAM07795"/>
    <property type="gene ID" value="NMA0518"/>
</dbReference>
<dbReference type="KEGG" id="nma:NMA0518"/>
<dbReference type="HOGENOM" id="CLU_050669_0_1_4"/>
<dbReference type="Proteomes" id="UP000000626">
    <property type="component" value="Chromosome"/>
</dbReference>
<dbReference type="GO" id="GO:0005886">
    <property type="term" value="C:plasma membrane"/>
    <property type="evidence" value="ECO:0007669"/>
    <property type="project" value="UniProtKB-SubCell"/>
</dbReference>
<dbReference type="GO" id="GO:0045259">
    <property type="term" value="C:proton-transporting ATP synthase complex"/>
    <property type="evidence" value="ECO:0007669"/>
    <property type="project" value="UniProtKB-KW"/>
</dbReference>
<dbReference type="GO" id="GO:0005524">
    <property type="term" value="F:ATP binding"/>
    <property type="evidence" value="ECO:0007669"/>
    <property type="project" value="UniProtKB-UniRule"/>
</dbReference>
<dbReference type="GO" id="GO:0046933">
    <property type="term" value="F:proton-transporting ATP synthase activity, rotational mechanism"/>
    <property type="evidence" value="ECO:0007669"/>
    <property type="project" value="UniProtKB-UniRule"/>
</dbReference>
<dbReference type="GO" id="GO:0042777">
    <property type="term" value="P:proton motive force-driven plasma membrane ATP synthesis"/>
    <property type="evidence" value="ECO:0007669"/>
    <property type="project" value="UniProtKB-UniRule"/>
</dbReference>
<dbReference type="CDD" id="cd12151">
    <property type="entry name" value="F1-ATPase_gamma"/>
    <property type="match status" value="1"/>
</dbReference>
<dbReference type="FunFam" id="1.10.287.80:FF:000005">
    <property type="entry name" value="ATP synthase gamma chain"/>
    <property type="match status" value="1"/>
</dbReference>
<dbReference type="FunFam" id="3.40.1380.10:FF:000008">
    <property type="entry name" value="ATP synthase gamma chain"/>
    <property type="match status" value="1"/>
</dbReference>
<dbReference type="Gene3D" id="3.40.1380.10">
    <property type="match status" value="1"/>
</dbReference>
<dbReference type="Gene3D" id="1.10.287.80">
    <property type="entry name" value="ATP synthase, gamma subunit, helix hairpin domain"/>
    <property type="match status" value="1"/>
</dbReference>
<dbReference type="HAMAP" id="MF_00815">
    <property type="entry name" value="ATP_synth_gamma_bact"/>
    <property type="match status" value="1"/>
</dbReference>
<dbReference type="InterPro" id="IPR035968">
    <property type="entry name" value="ATP_synth_F1_ATPase_gsu"/>
</dbReference>
<dbReference type="InterPro" id="IPR000131">
    <property type="entry name" value="ATP_synth_F1_gsu"/>
</dbReference>
<dbReference type="InterPro" id="IPR023632">
    <property type="entry name" value="ATP_synth_F1_gsu_CS"/>
</dbReference>
<dbReference type="NCBIfam" id="TIGR01146">
    <property type="entry name" value="ATPsyn_F1gamma"/>
    <property type="match status" value="1"/>
</dbReference>
<dbReference type="NCBIfam" id="NF004144">
    <property type="entry name" value="PRK05621.1-1"/>
    <property type="match status" value="1"/>
</dbReference>
<dbReference type="PANTHER" id="PTHR11693">
    <property type="entry name" value="ATP SYNTHASE GAMMA CHAIN"/>
    <property type="match status" value="1"/>
</dbReference>
<dbReference type="PANTHER" id="PTHR11693:SF22">
    <property type="entry name" value="ATP SYNTHASE SUBUNIT GAMMA, MITOCHONDRIAL"/>
    <property type="match status" value="1"/>
</dbReference>
<dbReference type="Pfam" id="PF00231">
    <property type="entry name" value="ATP-synt"/>
    <property type="match status" value="1"/>
</dbReference>
<dbReference type="PRINTS" id="PR00126">
    <property type="entry name" value="ATPASEGAMMA"/>
</dbReference>
<dbReference type="SUPFAM" id="SSF52943">
    <property type="entry name" value="ATP synthase (F1-ATPase), gamma subunit"/>
    <property type="match status" value="1"/>
</dbReference>
<dbReference type="PROSITE" id="PS00153">
    <property type="entry name" value="ATPASE_GAMMA"/>
    <property type="match status" value="1"/>
</dbReference>
<sequence>MAVGKEILTKIRSVQNTQKITKAMQMVSTSKMRKTQERMRLARPYAEKVRMVMSHLAQTNTDHGIPLLESHREIRRVGFILITSDKGLCGGLNANVLKKFLAQVQEYQNQGIEEEIVCLGSKGLMACQSIGLNVVASAVNLGDTPKMEMLLGPLTELFQRYEKHEIDRIHLVYSGFVNTMRQEPRMEVLLPIGENVIGDSAPKSPFSWEYRYEPTALAVLEYLVRRYLESVVYQALSDNMASEQAARMVAMKAATDNAGNAIKELRLVYNKSRQAAITTELSEIVAGAAAV</sequence>
<name>ATPG_NEIMA</name>
<gene>
    <name evidence="1" type="primary">atpG</name>
    <name type="ordered locus">NMA0518</name>
</gene>
<comment type="function">
    <text evidence="1">Produces ATP from ADP in the presence of a proton gradient across the membrane. The gamma chain is believed to be important in regulating ATPase activity and the flow of protons through the CF(0) complex.</text>
</comment>
<comment type="subunit">
    <text evidence="1">F-type ATPases have 2 components, CF(1) - the catalytic core - and CF(0) - the membrane proton channel. CF(1) has five subunits: alpha(3), beta(3), gamma(1), delta(1), epsilon(1). CF(0) has three main subunits: a, b and c.</text>
</comment>
<comment type="subcellular location">
    <subcellularLocation>
        <location evidence="1">Cell inner membrane</location>
        <topology evidence="1">Peripheral membrane protein</topology>
    </subcellularLocation>
</comment>
<comment type="similarity">
    <text evidence="1">Belongs to the ATPase gamma chain family.</text>
</comment>